<proteinExistence type="evidence at transcript level"/>
<organism>
    <name type="scientific">Gallus gallus</name>
    <name type="common">Chicken</name>
    <dbReference type="NCBI Taxonomy" id="9031"/>
    <lineage>
        <taxon>Eukaryota</taxon>
        <taxon>Metazoa</taxon>
        <taxon>Chordata</taxon>
        <taxon>Craniata</taxon>
        <taxon>Vertebrata</taxon>
        <taxon>Euteleostomi</taxon>
        <taxon>Archelosauria</taxon>
        <taxon>Archosauria</taxon>
        <taxon>Dinosauria</taxon>
        <taxon>Saurischia</taxon>
        <taxon>Theropoda</taxon>
        <taxon>Coelurosauria</taxon>
        <taxon>Aves</taxon>
        <taxon>Neognathae</taxon>
        <taxon>Galloanserae</taxon>
        <taxon>Galliformes</taxon>
        <taxon>Phasianidae</taxon>
        <taxon>Phasianinae</taxon>
        <taxon>Gallus</taxon>
    </lineage>
</organism>
<feature type="chain" id="PRO_0000260519" description="Lysosomal cobalamin transport escort protein LMBD1">
    <location>
        <begin position="1"/>
        <end position="539"/>
    </location>
</feature>
<feature type="topological domain" description="Extracellular" evidence="3">
    <location>
        <begin position="1"/>
        <end position="7"/>
    </location>
</feature>
<feature type="transmembrane region" description="Helical; Name=1" evidence="3">
    <location>
        <begin position="8"/>
        <end position="28"/>
    </location>
</feature>
<feature type="topological domain" description="Cytoplasmic" evidence="3">
    <location>
        <begin position="29"/>
        <end position="47"/>
    </location>
</feature>
<feature type="transmembrane region" description="Helical; Name=2" evidence="3">
    <location>
        <begin position="48"/>
        <end position="68"/>
    </location>
</feature>
<feature type="topological domain" description="Extracellular" evidence="3">
    <location>
        <begin position="69"/>
        <end position="97"/>
    </location>
</feature>
<feature type="transmembrane region" description="Helical; Name=3" evidence="3">
    <location>
        <begin position="98"/>
        <end position="118"/>
    </location>
</feature>
<feature type="topological domain" description="Cytoplasmic" evidence="3">
    <location>
        <begin position="119"/>
        <end position="141"/>
    </location>
</feature>
<feature type="transmembrane region" description="Helical; Name=4" evidence="3">
    <location>
        <begin position="142"/>
        <end position="162"/>
    </location>
</feature>
<feature type="topological domain" description="Extracellular" evidence="3">
    <location>
        <begin position="163"/>
        <end position="185"/>
    </location>
</feature>
<feature type="transmembrane region" description="Helical; Name=5" evidence="3">
    <location>
        <begin position="186"/>
        <end position="206"/>
    </location>
</feature>
<feature type="topological domain" description="Cytoplasmic" evidence="3">
    <location>
        <begin position="207"/>
        <end position="302"/>
    </location>
</feature>
<feature type="transmembrane region" description="Helical; Name=6" evidence="3">
    <location>
        <begin position="303"/>
        <end position="323"/>
    </location>
</feature>
<feature type="topological domain" description="Extracellular" evidence="3">
    <location>
        <begin position="324"/>
        <end position="361"/>
    </location>
</feature>
<feature type="transmembrane region" description="Helical; Name=7" evidence="3">
    <location>
        <begin position="362"/>
        <end position="382"/>
    </location>
</feature>
<feature type="topological domain" description="Cytoplasmic" evidence="3">
    <location>
        <begin position="383"/>
        <end position="405"/>
    </location>
</feature>
<feature type="transmembrane region" description="Helical; Name=8" evidence="3">
    <location>
        <begin position="406"/>
        <end position="426"/>
    </location>
</feature>
<feature type="topological domain" description="Extracellular" evidence="3">
    <location>
        <begin position="427"/>
        <end position="483"/>
    </location>
</feature>
<feature type="transmembrane region" description="Helical; Name=9" evidence="3">
    <location>
        <begin position="484"/>
        <end position="504"/>
    </location>
</feature>
<feature type="topological domain" description="Cytoplasmic" evidence="3">
    <location>
        <begin position="505"/>
        <end position="539"/>
    </location>
</feature>
<feature type="glycosylation site" description="N-linked (GlcNAc...) asparagine" evidence="3">
    <location>
        <position position="75"/>
    </location>
</feature>
<feature type="glycosylation site" description="N-linked (GlcNAc...) asparagine" evidence="3">
    <location>
        <position position="85"/>
    </location>
</feature>
<feature type="glycosylation site" description="N-linked (GlcNAc...) asparagine" evidence="3">
    <location>
        <position position="167"/>
    </location>
</feature>
<feature type="glycosylation site" description="N-linked (GlcNAc...) asparagine" evidence="3">
    <location>
        <position position="344"/>
    </location>
</feature>
<feature type="glycosylation site" description="N-linked (GlcNAc...) asparagine" evidence="3">
    <location>
        <position position="445"/>
    </location>
</feature>
<feature type="glycosylation site" description="N-linked (GlcNAc...) asparagine" evidence="3">
    <location>
        <position position="454"/>
    </location>
</feature>
<evidence type="ECO:0000250" key="1">
    <source>
        <dbReference type="UniProtKB" id="Q8K0B2"/>
    </source>
</evidence>
<evidence type="ECO:0000250" key="2">
    <source>
        <dbReference type="UniProtKB" id="Q9NUN5"/>
    </source>
</evidence>
<evidence type="ECO:0000255" key="3"/>
<evidence type="ECO:0000305" key="4"/>
<gene>
    <name type="primary">LMBRD1</name>
    <name type="ORF">RCJMB04_31k18</name>
</gene>
<comment type="function">
    <text evidence="1 2">Lysosomal membrane chaperone required to export cobalamin (vitamin B12) from the lysosome to the cytosol, allowing its conversion to cofactors. Targets ABCD4 transporter from the endoplasmic reticulum to the lysosome. Then forms a complex with lysosomal ABCD4 and cytoplasmic MMACHC to transport cobalamin across the lysosomal membrane (By similarity). May play a role in mediating and regulating the internalization of the insulin receptor (By similarity).</text>
</comment>
<comment type="subcellular location">
    <subcellularLocation>
        <location evidence="2">Endoplasmic reticulum membrane</location>
    </subcellularLocation>
    <subcellularLocation>
        <location evidence="2">Lysosome membrane</location>
        <topology evidence="3">Multi-pass membrane protein</topology>
    </subcellularLocation>
    <subcellularLocation>
        <location evidence="1">Cell membrane</location>
        <topology evidence="3">Multi-pass membrane protein</topology>
    </subcellularLocation>
</comment>
<comment type="similarity">
    <text evidence="4">Belongs to the LIMR family. LMBRD1 subfamily.</text>
</comment>
<accession>Q5ZI05</accession>
<protein>
    <recommendedName>
        <fullName evidence="2">Lysosomal cobalamin transport escort protein LMBD1</fullName>
        <shortName>LMBD1</shortName>
    </recommendedName>
    <alternativeName>
        <fullName>LMBR1 domain-containing protein 1</fullName>
    </alternativeName>
</protein>
<reference key="1">
    <citation type="journal article" date="2005" name="Genome Biol.">
        <title>Full-length cDNAs from chicken bursal lymphocytes to facilitate gene function analysis.</title>
        <authorList>
            <person name="Caldwell R.B."/>
            <person name="Kierzek A.M."/>
            <person name="Arakawa H."/>
            <person name="Bezzubov Y."/>
            <person name="Zaim J."/>
            <person name="Fiedler P."/>
            <person name="Kutter S."/>
            <person name="Blagodatski A."/>
            <person name="Kostovska D."/>
            <person name="Koter M."/>
            <person name="Plachy J."/>
            <person name="Carninci P."/>
            <person name="Hayashizaki Y."/>
            <person name="Buerstedde J.-M."/>
        </authorList>
    </citation>
    <scope>NUCLEOTIDE SEQUENCE [LARGE SCALE MRNA]</scope>
    <source>
        <strain>CB</strain>
        <tissue>Bursa of Fabricius</tissue>
    </source>
</reference>
<sequence>MAAAASELLTGWFLFGLALLAILIFSWVYVRKYQSRRESEVISTVTAIFALAVALISSALLPVDIFLVSYMKNQNGTFKDWADANVSRQIEDTVLYGYYTLYSIILFCVFLWIPFVYFYYEEKEEDDGNTCSQVKTALKYTLGFITVCAVLLLIGAFVPLDIPNKKNSTEWEKVKLLFEEFGSSHGLTALSFSISSLTVIGMLAAITYTAYGMSALPLNLIKGTTSAAYERLENTEDIEEVEQRILRIKSKCRDGRPLSSRDRRAVQQLEERLRTLRRRERHLETIEKSWWLKFCEAIRPLKIVWGVFFIIVALLFTVSLFLSNLDKALHSAGFDSGFIILGTNLTNPLNMLLPVLQTVFPLDYILITTIVMYFIFTSMAGIRNMGIWFFWIRLYKIRRGKTRPQALLFLCMILLLIVLHTSYMIYSLAPQYVMYGSQKYLVQSNKTIDGQPKNVTTFVAKDCDADAPEDQCIVTRTYLFLHKFWFFSAVYYFGNWAFIAVFLIGLIVSCCKGKKSVIEGEVDEDDSDMSDDELSAYYC</sequence>
<dbReference type="EMBL" id="AJ720979">
    <property type="protein sequence ID" value="CAG32638.1"/>
    <property type="molecule type" value="mRNA"/>
</dbReference>
<dbReference type="RefSeq" id="NP_001006413.1">
    <property type="nucleotide sequence ID" value="NM_001006413.1"/>
</dbReference>
<dbReference type="SMR" id="Q5ZI05"/>
<dbReference type="FunCoup" id="Q5ZI05">
    <property type="interactions" value="1087"/>
</dbReference>
<dbReference type="STRING" id="9031.ENSGALP00000047100"/>
<dbReference type="GlyCosmos" id="Q5ZI05">
    <property type="glycosylation" value="6 sites, No reported glycans"/>
</dbReference>
<dbReference type="GlyGen" id="Q5ZI05">
    <property type="glycosylation" value="6 sites"/>
</dbReference>
<dbReference type="PaxDb" id="9031-ENSGALP00000031013"/>
<dbReference type="GeneID" id="421874"/>
<dbReference type="KEGG" id="gga:421874"/>
<dbReference type="CTD" id="55788"/>
<dbReference type="VEuPathDB" id="HostDB:geneid_421874"/>
<dbReference type="eggNOG" id="ENOG502QQ2T">
    <property type="taxonomic scope" value="Eukaryota"/>
</dbReference>
<dbReference type="InParanoid" id="Q5ZI05"/>
<dbReference type="OrthoDB" id="73273at2759"/>
<dbReference type="PhylomeDB" id="Q5ZI05"/>
<dbReference type="PRO" id="PR:Q5ZI05"/>
<dbReference type="Proteomes" id="UP000000539">
    <property type="component" value="Unassembled WGS sequence"/>
</dbReference>
<dbReference type="GO" id="GO:0045334">
    <property type="term" value="C:clathrin-coated endocytic vesicle"/>
    <property type="evidence" value="ECO:0000250"/>
    <property type="project" value="UniProtKB"/>
</dbReference>
<dbReference type="GO" id="GO:0005789">
    <property type="term" value="C:endoplasmic reticulum membrane"/>
    <property type="evidence" value="ECO:0000250"/>
    <property type="project" value="UniProtKB"/>
</dbReference>
<dbReference type="GO" id="GO:0005765">
    <property type="term" value="C:lysosomal membrane"/>
    <property type="evidence" value="ECO:0000250"/>
    <property type="project" value="UniProtKB"/>
</dbReference>
<dbReference type="GO" id="GO:0005886">
    <property type="term" value="C:plasma membrane"/>
    <property type="evidence" value="ECO:0000250"/>
    <property type="project" value="UniProtKB"/>
</dbReference>
<dbReference type="GO" id="GO:0031419">
    <property type="term" value="F:cobalamin binding"/>
    <property type="evidence" value="ECO:0007669"/>
    <property type="project" value="UniProtKB-KW"/>
</dbReference>
<dbReference type="GO" id="GO:0038016">
    <property type="term" value="P:insulin receptor internalization"/>
    <property type="evidence" value="ECO:0000250"/>
    <property type="project" value="UniProtKB"/>
</dbReference>
<dbReference type="GO" id="GO:0061462">
    <property type="term" value="P:protein localization to lysosome"/>
    <property type="evidence" value="ECO:0000250"/>
    <property type="project" value="UniProtKB"/>
</dbReference>
<dbReference type="InterPro" id="IPR050854">
    <property type="entry name" value="LMBD1_LysCbl_Transport"/>
</dbReference>
<dbReference type="InterPro" id="IPR006876">
    <property type="entry name" value="LMBR1-like_membr_prot"/>
</dbReference>
<dbReference type="PANTHER" id="PTHR16130:SF2">
    <property type="entry name" value="LYSOSOMAL COBALAMIN TRANSPORT ESCORT PROTEIN LMBD1"/>
    <property type="match status" value="1"/>
</dbReference>
<dbReference type="PANTHER" id="PTHR16130">
    <property type="entry name" value="LYSOSOMAL COBALAMIN TRANSPORTER-RELATED"/>
    <property type="match status" value="1"/>
</dbReference>
<dbReference type="Pfam" id="PF04791">
    <property type="entry name" value="LMBR1"/>
    <property type="match status" value="1"/>
</dbReference>
<name>LMBD1_CHICK</name>
<keyword id="KW-1003">Cell membrane</keyword>
<keyword id="KW-0846">Cobalamin</keyword>
<keyword id="KW-0170">Cobalt</keyword>
<keyword id="KW-0256">Endoplasmic reticulum</keyword>
<keyword id="KW-0325">Glycoprotein</keyword>
<keyword id="KW-0458">Lysosome</keyword>
<keyword id="KW-0472">Membrane</keyword>
<keyword id="KW-1185">Reference proteome</keyword>
<keyword id="KW-0812">Transmembrane</keyword>
<keyword id="KW-1133">Transmembrane helix</keyword>
<keyword id="KW-0813">Transport</keyword>